<protein>
    <recommendedName>
        <fullName evidence="1">UDP-N-acetylmuramate--L-alanine ligase</fullName>
        <ecNumber evidence="1">6.3.2.8</ecNumber>
    </recommendedName>
    <alternativeName>
        <fullName evidence="1">UDP-N-acetylmuramoyl-L-alanine synthetase</fullName>
    </alternativeName>
</protein>
<evidence type="ECO:0000255" key="1">
    <source>
        <dbReference type="HAMAP-Rule" id="MF_00046"/>
    </source>
</evidence>
<proteinExistence type="inferred from homology"/>
<keyword id="KW-0067">ATP-binding</keyword>
<keyword id="KW-0131">Cell cycle</keyword>
<keyword id="KW-0132">Cell division</keyword>
<keyword id="KW-0133">Cell shape</keyword>
<keyword id="KW-0961">Cell wall biogenesis/degradation</keyword>
<keyword id="KW-0963">Cytoplasm</keyword>
<keyword id="KW-0436">Ligase</keyword>
<keyword id="KW-0547">Nucleotide-binding</keyword>
<keyword id="KW-0573">Peptidoglycan synthesis</keyword>
<reference key="1">
    <citation type="submission" date="2006-12" db="EMBL/GenBank/DDBJ databases">
        <title>Complete sequence of Shewanella sp. W3-18-1.</title>
        <authorList>
            <consortium name="US DOE Joint Genome Institute"/>
            <person name="Copeland A."/>
            <person name="Lucas S."/>
            <person name="Lapidus A."/>
            <person name="Barry K."/>
            <person name="Detter J.C."/>
            <person name="Glavina del Rio T."/>
            <person name="Hammon N."/>
            <person name="Israni S."/>
            <person name="Dalin E."/>
            <person name="Tice H."/>
            <person name="Pitluck S."/>
            <person name="Chain P."/>
            <person name="Malfatti S."/>
            <person name="Shin M."/>
            <person name="Vergez L."/>
            <person name="Schmutz J."/>
            <person name="Larimer F."/>
            <person name="Land M."/>
            <person name="Hauser L."/>
            <person name="Kyrpides N."/>
            <person name="Lykidis A."/>
            <person name="Tiedje J."/>
            <person name="Richardson P."/>
        </authorList>
    </citation>
    <scope>NUCLEOTIDE SEQUENCE [LARGE SCALE GENOMIC DNA]</scope>
    <source>
        <strain>W3-18-1</strain>
    </source>
</reference>
<name>MURC_SHESW</name>
<organism>
    <name type="scientific">Shewanella sp. (strain W3-18-1)</name>
    <dbReference type="NCBI Taxonomy" id="351745"/>
    <lineage>
        <taxon>Bacteria</taxon>
        <taxon>Pseudomonadati</taxon>
        <taxon>Pseudomonadota</taxon>
        <taxon>Gammaproteobacteria</taxon>
        <taxon>Alteromonadales</taxon>
        <taxon>Shewanellaceae</taxon>
        <taxon>Shewanella</taxon>
    </lineage>
</organism>
<gene>
    <name evidence="1" type="primary">murC</name>
    <name type="ordered locus">Sputw3181_0391</name>
</gene>
<accession>A1REZ7</accession>
<feature type="chain" id="PRO_1000004412" description="UDP-N-acetylmuramate--L-alanine ligase">
    <location>
        <begin position="1"/>
        <end position="488"/>
    </location>
</feature>
<feature type="binding site" evidence="1">
    <location>
        <begin position="127"/>
        <end position="133"/>
    </location>
    <ligand>
        <name>ATP</name>
        <dbReference type="ChEBI" id="CHEBI:30616"/>
    </ligand>
</feature>
<comment type="function">
    <text evidence="1">Cell wall formation.</text>
</comment>
<comment type="catalytic activity">
    <reaction evidence="1">
        <text>UDP-N-acetyl-alpha-D-muramate + L-alanine + ATP = UDP-N-acetyl-alpha-D-muramoyl-L-alanine + ADP + phosphate + H(+)</text>
        <dbReference type="Rhea" id="RHEA:23372"/>
        <dbReference type="ChEBI" id="CHEBI:15378"/>
        <dbReference type="ChEBI" id="CHEBI:30616"/>
        <dbReference type="ChEBI" id="CHEBI:43474"/>
        <dbReference type="ChEBI" id="CHEBI:57972"/>
        <dbReference type="ChEBI" id="CHEBI:70757"/>
        <dbReference type="ChEBI" id="CHEBI:83898"/>
        <dbReference type="ChEBI" id="CHEBI:456216"/>
        <dbReference type="EC" id="6.3.2.8"/>
    </reaction>
</comment>
<comment type="pathway">
    <text evidence="1">Cell wall biogenesis; peptidoglycan biosynthesis.</text>
</comment>
<comment type="subcellular location">
    <subcellularLocation>
        <location evidence="1">Cytoplasm</location>
    </subcellularLocation>
</comment>
<comment type="similarity">
    <text evidence="1">Belongs to the MurCDEF family.</text>
</comment>
<sequence>MTKTERYIQLRSMIPEMRRIKRIHFVGIGGAGMGGIAEVLVNEGYQVSGSDIAQNTVTDRLCLLGAKIQIGHAADNVQQVDVVVVSTAINAENPEIIAAKELRIPIVRRAEMLAELMRYRHGVAIAGTHGKTTTTSLIASVYGQAGRDPTFVIGGLLNSAGTNARLGTSRYLIAEADESDASFLHLQPMVSVVTNIEADHMDTYGGDFEKLKSTFVDFLHNLPFYGVAVVCIDDPVVREIMPRIGRHLVTYGFSDDADVQALNFSQQGHQCRFTVRRKGKEDLDLLLNLPGQHNVLNALAAIAVATEDEIDDSALIQALAEFQGIGRRFQHLGKFATPKGEVMLVDDYGHHPSEVAATIKAARAGWPEKRLVMAYQPHRYTRTRDLYEDFIEVLSQVDCLLLLDVYSAGEAPITGADGRALCRSIRLRGQLDPIFIASPDQLAEVLPDVLQEGDLLLTQGAGNIGALSRQLAVTELGFAKVEIAQVPA</sequence>
<dbReference type="EC" id="6.3.2.8" evidence="1"/>
<dbReference type="EMBL" id="CP000503">
    <property type="protein sequence ID" value="ABM23242.1"/>
    <property type="molecule type" value="Genomic_DNA"/>
</dbReference>
<dbReference type="RefSeq" id="WP_011787785.1">
    <property type="nucleotide sequence ID" value="NC_008750.1"/>
</dbReference>
<dbReference type="SMR" id="A1REZ7"/>
<dbReference type="GeneID" id="67441947"/>
<dbReference type="KEGG" id="shw:Sputw3181_0391"/>
<dbReference type="HOGENOM" id="CLU_028104_2_2_6"/>
<dbReference type="UniPathway" id="UPA00219"/>
<dbReference type="Proteomes" id="UP000002597">
    <property type="component" value="Chromosome"/>
</dbReference>
<dbReference type="GO" id="GO:0005737">
    <property type="term" value="C:cytoplasm"/>
    <property type="evidence" value="ECO:0007669"/>
    <property type="project" value="UniProtKB-SubCell"/>
</dbReference>
<dbReference type="GO" id="GO:0005524">
    <property type="term" value="F:ATP binding"/>
    <property type="evidence" value="ECO:0007669"/>
    <property type="project" value="UniProtKB-UniRule"/>
</dbReference>
<dbReference type="GO" id="GO:0008763">
    <property type="term" value="F:UDP-N-acetylmuramate-L-alanine ligase activity"/>
    <property type="evidence" value="ECO:0007669"/>
    <property type="project" value="UniProtKB-UniRule"/>
</dbReference>
<dbReference type="GO" id="GO:0051301">
    <property type="term" value="P:cell division"/>
    <property type="evidence" value="ECO:0007669"/>
    <property type="project" value="UniProtKB-KW"/>
</dbReference>
<dbReference type="GO" id="GO:0071555">
    <property type="term" value="P:cell wall organization"/>
    <property type="evidence" value="ECO:0007669"/>
    <property type="project" value="UniProtKB-KW"/>
</dbReference>
<dbReference type="GO" id="GO:0009252">
    <property type="term" value="P:peptidoglycan biosynthetic process"/>
    <property type="evidence" value="ECO:0007669"/>
    <property type="project" value="UniProtKB-UniRule"/>
</dbReference>
<dbReference type="GO" id="GO:0008360">
    <property type="term" value="P:regulation of cell shape"/>
    <property type="evidence" value="ECO:0007669"/>
    <property type="project" value="UniProtKB-KW"/>
</dbReference>
<dbReference type="FunFam" id="3.40.1190.10:FF:000001">
    <property type="entry name" value="UDP-N-acetylmuramate--L-alanine ligase"/>
    <property type="match status" value="1"/>
</dbReference>
<dbReference type="FunFam" id="3.40.50.720:FF:000046">
    <property type="entry name" value="UDP-N-acetylmuramate--L-alanine ligase"/>
    <property type="match status" value="1"/>
</dbReference>
<dbReference type="Gene3D" id="3.90.190.20">
    <property type="entry name" value="Mur ligase, C-terminal domain"/>
    <property type="match status" value="1"/>
</dbReference>
<dbReference type="Gene3D" id="3.40.1190.10">
    <property type="entry name" value="Mur-like, catalytic domain"/>
    <property type="match status" value="1"/>
</dbReference>
<dbReference type="Gene3D" id="3.40.50.720">
    <property type="entry name" value="NAD(P)-binding Rossmann-like Domain"/>
    <property type="match status" value="1"/>
</dbReference>
<dbReference type="HAMAP" id="MF_00046">
    <property type="entry name" value="MurC"/>
    <property type="match status" value="1"/>
</dbReference>
<dbReference type="InterPro" id="IPR036565">
    <property type="entry name" value="Mur-like_cat_sf"/>
</dbReference>
<dbReference type="InterPro" id="IPR004101">
    <property type="entry name" value="Mur_ligase_C"/>
</dbReference>
<dbReference type="InterPro" id="IPR036615">
    <property type="entry name" value="Mur_ligase_C_dom_sf"/>
</dbReference>
<dbReference type="InterPro" id="IPR013221">
    <property type="entry name" value="Mur_ligase_cen"/>
</dbReference>
<dbReference type="InterPro" id="IPR000713">
    <property type="entry name" value="Mur_ligase_N"/>
</dbReference>
<dbReference type="InterPro" id="IPR050061">
    <property type="entry name" value="MurCDEF_pg_biosynth"/>
</dbReference>
<dbReference type="InterPro" id="IPR005758">
    <property type="entry name" value="UDP-N-AcMur_Ala_ligase_MurC"/>
</dbReference>
<dbReference type="NCBIfam" id="TIGR01082">
    <property type="entry name" value="murC"/>
    <property type="match status" value="1"/>
</dbReference>
<dbReference type="PANTHER" id="PTHR43445:SF3">
    <property type="entry name" value="UDP-N-ACETYLMURAMATE--L-ALANINE LIGASE"/>
    <property type="match status" value="1"/>
</dbReference>
<dbReference type="PANTHER" id="PTHR43445">
    <property type="entry name" value="UDP-N-ACETYLMURAMATE--L-ALANINE LIGASE-RELATED"/>
    <property type="match status" value="1"/>
</dbReference>
<dbReference type="Pfam" id="PF01225">
    <property type="entry name" value="Mur_ligase"/>
    <property type="match status" value="1"/>
</dbReference>
<dbReference type="Pfam" id="PF02875">
    <property type="entry name" value="Mur_ligase_C"/>
    <property type="match status" value="1"/>
</dbReference>
<dbReference type="Pfam" id="PF08245">
    <property type="entry name" value="Mur_ligase_M"/>
    <property type="match status" value="1"/>
</dbReference>
<dbReference type="SUPFAM" id="SSF51984">
    <property type="entry name" value="MurCD N-terminal domain"/>
    <property type="match status" value="1"/>
</dbReference>
<dbReference type="SUPFAM" id="SSF53623">
    <property type="entry name" value="MurD-like peptide ligases, catalytic domain"/>
    <property type="match status" value="1"/>
</dbReference>
<dbReference type="SUPFAM" id="SSF53244">
    <property type="entry name" value="MurD-like peptide ligases, peptide-binding domain"/>
    <property type="match status" value="1"/>
</dbReference>